<feature type="chain" id="PRO_0000216322" description="Uncharacterized protein PM1295">
    <location>
        <begin position="1"/>
        <end position="85"/>
    </location>
</feature>
<feature type="region of interest" description="Disordered" evidence="1">
    <location>
        <begin position="35"/>
        <end position="85"/>
    </location>
</feature>
<accession>Q9CLE2</accession>
<name>Y1295_PASMU</name>
<gene>
    <name type="ordered locus">PM1295</name>
</gene>
<proteinExistence type="predicted"/>
<protein>
    <recommendedName>
        <fullName>Uncharacterized protein PM1295</fullName>
    </recommendedName>
</protein>
<organism>
    <name type="scientific">Pasteurella multocida (strain Pm70)</name>
    <dbReference type="NCBI Taxonomy" id="272843"/>
    <lineage>
        <taxon>Bacteria</taxon>
        <taxon>Pseudomonadati</taxon>
        <taxon>Pseudomonadota</taxon>
        <taxon>Gammaproteobacteria</taxon>
        <taxon>Pasteurellales</taxon>
        <taxon>Pasteurellaceae</taxon>
        <taxon>Pasteurella</taxon>
    </lineage>
</organism>
<evidence type="ECO:0000256" key="1">
    <source>
        <dbReference type="SAM" id="MobiDB-lite"/>
    </source>
</evidence>
<keyword id="KW-1185">Reference proteome</keyword>
<dbReference type="EMBL" id="AE004439">
    <property type="protein sequence ID" value="AAK03379.1"/>
    <property type="molecule type" value="Genomic_DNA"/>
</dbReference>
<dbReference type="STRING" id="272843.PM1295"/>
<dbReference type="EnsemblBacteria" id="AAK03379">
    <property type="protein sequence ID" value="AAK03379"/>
    <property type="gene ID" value="PM1295"/>
</dbReference>
<dbReference type="KEGG" id="pmu:PM1295"/>
<dbReference type="HOGENOM" id="CLU_2509716_0_0_6"/>
<dbReference type="Proteomes" id="UP000000809">
    <property type="component" value="Chromosome"/>
</dbReference>
<reference key="1">
    <citation type="journal article" date="2001" name="Proc. Natl. Acad. Sci. U.S.A.">
        <title>Complete genomic sequence of Pasteurella multocida Pm70.</title>
        <authorList>
            <person name="May B.J."/>
            <person name="Zhang Q."/>
            <person name="Li L.L."/>
            <person name="Paustian M.L."/>
            <person name="Whittam T.S."/>
            <person name="Kapur V."/>
        </authorList>
    </citation>
    <scope>NUCLEOTIDE SEQUENCE [LARGE SCALE GENOMIC DNA]</scope>
    <source>
        <strain>Pm70</strain>
    </source>
</reference>
<sequence>MLFHIYHLSRFTTANKISGNYAAFCASLTKAETRSDKDAPFSTQALTRSKSKRKRSALPVANGLKKPTRSIKRPSRGERLSATTI</sequence>